<comment type="function">
    <text evidence="1">Forms part of the ribosomal stalk which helps the ribosome interact with GTP-bound translation factors. Is thus essential for accurate translation.</text>
</comment>
<comment type="subunit">
    <text evidence="1">Homodimer. Part of the ribosomal stalk of the 50S ribosomal subunit. Forms a multimeric L10(L12)X complex, where L10 forms an elongated spine to which 2 to 4 L12 dimers bind in a sequential fashion. Binds GTP-bound translation factors.</text>
</comment>
<comment type="similarity">
    <text evidence="1">Belongs to the bacterial ribosomal protein bL12 family.</text>
</comment>
<organism>
    <name type="scientific">Bartonella tribocorum (strain CIP 105476 / IBS 506)</name>
    <dbReference type="NCBI Taxonomy" id="382640"/>
    <lineage>
        <taxon>Bacteria</taxon>
        <taxon>Pseudomonadati</taxon>
        <taxon>Pseudomonadota</taxon>
        <taxon>Alphaproteobacteria</taxon>
        <taxon>Hyphomicrobiales</taxon>
        <taxon>Bartonellaceae</taxon>
        <taxon>Bartonella</taxon>
    </lineage>
</organism>
<dbReference type="EMBL" id="AM260525">
    <property type="protein sequence ID" value="CAK01297.1"/>
    <property type="molecule type" value="Genomic_DNA"/>
</dbReference>
<dbReference type="RefSeq" id="WP_012231477.1">
    <property type="nucleotide sequence ID" value="NC_010161.1"/>
</dbReference>
<dbReference type="SMR" id="A9ISF8"/>
<dbReference type="GeneID" id="71061024"/>
<dbReference type="KEGG" id="btr:BT_0894"/>
<dbReference type="eggNOG" id="COG0222">
    <property type="taxonomic scope" value="Bacteria"/>
</dbReference>
<dbReference type="HOGENOM" id="CLU_086499_3_0_5"/>
<dbReference type="Proteomes" id="UP000001592">
    <property type="component" value="Chromosome"/>
</dbReference>
<dbReference type="GO" id="GO:0005737">
    <property type="term" value="C:cytoplasm"/>
    <property type="evidence" value="ECO:0007669"/>
    <property type="project" value="UniProtKB-ARBA"/>
</dbReference>
<dbReference type="GO" id="GO:1990904">
    <property type="term" value="C:ribonucleoprotein complex"/>
    <property type="evidence" value="ECO:0007669"/>
    <property type="project" value="UniProtKB-KW"/>
</dbReference>
<dbReference type="GO" id="GO:0005840">
    <property type="term" value="C:ribosome"/>
    <property type="evidence" value="ECO:0007669"/>
    <property type="project" value="UniProtKB-KW"/>
</dbReference>
<dbReference type="GO" id="GO:0003729">
    <property type="term" value="F:mRNA binding"/>
    <property type="evidence" value="ECO:0007669"/>
    <property type="project" value="TreeGrafter"/>
</dbReference>
<dbReference type="GO" id="GO:0003735">
    <property type="term" value="F:structural constituent of ribosome"/>
    <property type="evidence" value="ECO:0007669"/>
    <property type="project" value="InterPro"/>
</dbReference>
<dbReference type="GO" id="GO:0006412">
    <property type="term" value="P:translation"/>
    <property type="evidence" value="ECO:0007669"/>
    <property type="project" value="UniProtKB-UniRule"/>
</dbReference>
<dbReference type="CDD" id="cd00387">
    <property type="entry name" value="Ribosomal_L7_L12"/>
    <property type="match status" value="1"/>
</dbReference>
<dbReference type="FunFam" id="3.30.1390.10:FF:000001">
    <property type="entry name" value="50S ribosomal protein L7/L12"/>
    <property type="match status" value="1"/>
</dbReference>
<dbReference type="Gene3D" id="3.30.1390.10">
    <property type="match status" value="1"/>
</dbReference>
<dbReference type="Gene3D" id="1.20.5.710">
    <property type="entry name" value="Single helix bin"/>
    <property type="match status" value="1"/>
</dbReference>
<dbReference type="HAMAP" id="MF_00368">
    <property type="entry name" value="Ribosomal_bL12"/>
    <property type="match status" value="1"/>
</dbReference>
<dbReference type="InterPro" id="IPR000206">
    <property type="entry name" value="Ribosomal_bL12"/>
</dbReference>
<dbReference type="InterPro" id="IPR013823">
    <property type="entry name" value="Ribosomal_bL12_C"/>
</dbReference>
<dbReference type="InterPro" id="IPR014719">
    <property type="entry name" value="Ribosomal_bL12_C/ClpS-like"/>
</dbReference>
<dbReference type="InterPro" id="IPR008932">
    <property type="entry name" value="Ribosomal_bL12_oligo"/>
</dbReference>
<dbReference type="InterPro" id="IPR036235">
    <property type="entry name" value="Ribosomal_bL12_oligo_N_sf"/>
</dbReference>
<dbReference type="NCBIfam" id="TIGR00855">
    <property type="entry name" value="L12"/>
    <property type="match status" value="1"/>
</dbReference>
<dbReference type="PANTHER" id="PTHR45987">
    <property type="entry name" value="39S RIBOSOMAL PROTEIN L12"/>
    <property type="match status" value="1"/>
</dbReference>
<dbReference type="PANTHER" id="PTHR45987:SF4">
    <property type="entry name" value="LARGE RIBOSOMAL SUBUNIT PROTEIN BL12M"/>
    <property type="match status" value="1"/>
</dbReference>
<dbReference type="Pfam" id="PF00542">
    <property type="entry name" value="Ribosomal_L12"/>
    <property type="match status" value="1"/>
</dbReference>
<dbReference type="Pfam" id="PF16320">
    <property type="entry name" value="Ribosomal_L12_N"/>
    <property type="match status" value="1"/>
</dbReference>
<dbReference type="SUPFAM" id="SSF54736">
    <property type="entry name" value="ClpS-like"/>
    <property type="match status" value="1"/>
</dbReference>
<dbReference type="SUPFAM" id="SSF48300">
    <property type="entry name" value="Ribosomal protein L7/12, oligomerisation (N-terminal) domain"/>
    <property type="match status" value="1"/>
</dbReference>
<gene>
    <name evidence="1" type="primary">rplL</name>
    <name type="ordered locus">BT_0894</name>
</gene>
<protein>
    <recommendedName>
        <fullName evidence="1">Large ribosomal subunit protein bL12</fullName>
    </recommendedName>
    <alternativeName>
        <fullName evidence="2">50S ribosomal protein L7/L12</fullName>
    </alternativeName>
</protein>
<feature type="chain" id="PRO_1000079781" description="Large ribosomal subunit protein bL12">
    <location>
        <begin position="1"/>
        <end position="123"/>
    </location>
</feature>
<proteinExistence type="inferred from homology"/>
<reference key="1">
    <citation type="journal article" date="2007" name="Nat. Genet.">
        <title>Genomic analysis of Bartonella identifies type IV secretion systems as host adaptability factors.</title>
        <authorList>
            <person name="Saenz H.L."/>
            <person name="Engel P."/>
            <person name="Stoeckli M.C."/>
            <person name="Lanz C."/>
            <person name="Raddatz G."/>
            <person name="Vayssier-Taussat M."/>
            <person name="Birtles R."/>
            <person name="Schuster S.C."/>
            <person name="Dehio C."/>
        </authorList>
    </citation>
    <scope>NUCLEOTIDE SEQUENCE [LARGE SCALE GENOMIC DNA]</scope>
    <source>
        <strain>CIP 105476 / IBS 506</strain>
    </source>
</reference>
<accession>A9ISF8</accession>
<evidence type="ECO:0000255" key="1">
    <source>
        <dbReference type="HAMAP-Rule" id="MF_00368"/>
    </source>
</evidence>
<evidence type="ECO:0000305" key="2"/>
<name>RL7_BART1</name>
<keyword id="KW-0687">Ribonucleoprotein</keyword>
<keyword id="KW-0689">Ribosomal protein</keyword>
<sequence>MADLAKIVEDLSNLTLLEAAELSKLLEEKWGVSAAAPVAVAAVAGAAAPAAEEKTEFDVILVEGGAQKINVIKEVRALTGLGLKEAKDLVEGAPKPIKEGASKEEAEKIKSQLEAAGAKVELK</sequence>